<proteinExistence type="inferred from homology"/>
<protein>
    <recommendedName>
        <fullName evidence="1">tRNA-specific 2-thiouridylase MnmA</fullName>
        <ecNumber evidence="1">2.8.1.13</ecNumber>
    </recommendedName>
</protein>
<evidence type="ECO:0000255" key="1">
    <source>
        <dbReference type="HAMAP-Rule" id="MF_00144"/>
    </source>
</evidence>
<name>MNMA_RALN1</name>
<reference key="1">
    <citation type="journal article" date="2002" name="Nature">
        <title>Genome sequence of the plant pathogen Ralstonia solanacearum.</title>
        <authorList>
            <person name="Salanoubat M."/>
            <person name="Genin S."/>
            <person name="Artiguenave F."/>
            <person name="Gouzy J."/>
            <person name="Mangenot S."/>
            <person name="Arlat M."/>
            <person name="Billault A."/>
            <person name="Brottier P."/>
            <person name="Camus J.-C."/>
            <person name="Cattolico L."/>
            <person name="Chandler M."/>
            <person name="Choisne N."/>
            <person name="Claudel-Renard C."/>
            <person name="Cunnac S."/>
            <person name="Demange N."/>
            <person name="Gaspin C."/>
            <person name="Lavie M."/>
            <person name="Moisan A."/>
            <person name="Robert C."/>
            <person name="Saurin W."/>
            <person name="Schiex T."/>
            <person name="Siguier P."/>
            <person name="Thebault P."/>
            <person name="Whalen M."/>
            <person name="Wincker P."/>
            <person name="Levy M."/>
            <person name="Weissenbach J."/>
            <person name="Boucher C.A."/>
        </authorList>
    </citation>
    <scope>NUCLEOTIDE SEQUENCE [LARGE SCALE GENOMIC DNA]</scope>
    <source>
        <strain>ATCC BAA-1114 / GMI1000</strain>
    </source>
</reference>
<feature type="chain" id="PRO_0000121665" description="tRNA-specific 2-thiouridylase MnmA">
    <location>
        <begin position="1"/>
        <end position="370"/>
    </location>
</feature>
<feature type="region of interest" description="Interaction with target base in tRNA" evidence="1">
    <location>
        <begin position="95"/>
        <end position="97"/>
    </location>
</feature>
<feature type="region of interest" description="Interaction with tRNA" evidence="1">
    <location>
        <begin position="146"/>
        <end position="148"/>
    </location>
</feature>
<feature type="region of interest" description="Interaction with tRNA" evidence="1">
    <location>
        <begin position="308"/>
        <end position="309"/>
    </location>
</feature>
<feature type="active site" description="Nucleophile" evidence="1">
    <location>
        <position position="100"/>
    </location>
</feature>
<feature type="active site" description="Cysteine persulfide intermediate" evidence="1">
    <location>
        <position position="196"/>
    </location>
</feature>
<feature type="binding site" evidence="1">
    <location>
        <begin position="9"/>
        <end position="16"/>
    </location>
    <ligand>
        <name>ATP</name>
        <dbReference type="ChEBI" id="CHEBI:30616"/>
    </ligand>
</feature>
<feature type="binding site" evidence="1">
    <location>
        <position position="35"/>
    </location>
    <ligand>
        <name>ATP</name>
        <dbReference type="ChEBI" id="CHEBI:30616"/>
    </ligand>
</feature>
<feature type="binding site" evidence="1">
    <location>
        <position position="124"/>
    </location>
    <ligand>
        <name>ATP</name>
        <dbReference type="ChEBI" id="CHEBI:30616"/>
    </ligand>
</feature>
<feature type="site" description="Interaction with tRNA" evidence="1">
    <location>
        <position position="125"/>
    </location>
</feature>
<feature type="site" description="Interaction with tRNA" evidence="1">
    <location>
        <position position="341"/>
    </location>
</feature>
<feature type="disulfide bond" description="Alternate" evidence="1">
    <location>
        <begin position="100"/>
        <end position="196"/>
    </location>
</feature>
<gene>
    <name evidence="1" type="primary">mnmA</name>
    <name type="synonym">trmU</name>
    <name type="ordered locus">RSc2723</name>
    <name type="ORF">RS00131</name>
</gene>
<dbReference type="EC" id="2.8.1.13" evidence="1"/>
<dbReference type="EMBL" id="AL646052">
    <property type="protein sequence ID" value="CAD16430.1"/>
    <property type="molecule type" value="Genomic_DNA"/>
</dbReference>
<dbReference type="RefSeq" id="WP_011002630.1">
    <property type="nucleotide sequence ID" value="NC_003295.1"/>
</dbReference>
<dbReference type="SMR" id="Q8XVV4"/>
<dbReference type="STRING" id="267608.RSc2723"/>
<dbReference type="EnsemblBacteria" id="CAD16430">
    <property type="protein sequence ID" value="CAD16430"/>
    <property type="gene ID" value="RSc2723"/>
</dbReference>
<dbReference type="KEGG" id="rso:RSc2723"/>
<dbReference type="eggNOG" id="COG0482">
    <property type="taxonomic scope" value="Bacteria"/>
</dbReference>
<dbReference type="HOGENOM" id="CLU_035188_1_0_4"/>
<dbReference type="Proteomes" id="UP000001436">
    <property type="component" value="Chromosome"/>
</dbReference>
<dbReference type="GO" id="GO:0005737">
    <property type="term" value="C:cytoplasm"/>
    <property type="evidence" value="ECO:0007669"/>
    <property type="project" value="UniProtKB-SubCell"/>
</dbReference>
<dbReference type="GO" id="GO:0005524">
    <property type="term" value="F:ATP binding"/>
    <property type="evidence" value="ECO:0007669"/>
    <property type="project" value="UniProtKB-KW"/>
</dbReference>
<dbReference type="GO" id="GO:0000049">
    <property type="term" value="F:tRNA binding"/>
    <property type="evidence" value="ECO:0007669"/>
    <property type="project" value="UniProtKB-KW"/>
</dbReference>
<dbReference type="GO" id="GO:0103016">
    <property type="term" value="F:tRNA-uridine 2-sulfurtransferase activity"/>
    <property type="evidence" value="ECO:0007669"/>
    <property type="project" value="UniProtKB-EC"/>
</dbReference>
<dbReference type="GO" id="GO:0002143">
    <property type="term" value="P:tRNA wobble position uridine thiolation"/>
    <property type="evidence" value="ECO:0007669"/>
    <property type="project" value="TreeGrafter"/>
</dbReference>
<dbReference type="CDD" id="cd01998">
    <property type="entry name" value="MnmA_TRMU-like"/>
    <property type="match status" value="1"/>
</dbReference>
<dbReference type="FunFam" id="2.30.30.280:FF:000001">
    <property type="entry name" value="tRNA-specific 2-thiouridylase MnmA"/>
    <property type="match status" value="1"/>
</dbReference>
<dbReference type="FunFam" id="2.40.30.10:FF:000023">
    <property type="entry name" value="tRNA-specific 2-thiouridylase MnmA"/>
    <property type="match status" value="1"/>
</dbReference>
<dbReference type="FunFam" id="3.40.50.620:FF:000004">
    <property type="entry name" value="tRNA-specific 2-thiouridylase MnmA"/>
    <property type="match status" value="1"/>
</dbReference>
<dbReference type="Gene3D" id="2.30.30.280">
    <property type="entry name" value="Adenine nucleotide alpha hydrolases-like domains"/>
    <property type="match status" value="1"/>
</dbReference>
<dbReference type="Gene3D" id="3.40.50.620">
    <property type="entry name" value="HUPs"/>
    <property type="match status" value="1"/>
</dbReference>
<dbReference type="Gene3D" id="2.40.30.10">
    <property type="entry name" value="Translation factors"/>
    <property type="match status" value="1"/>
</dbReference>
<dbReference type="HAMAP" id="MF_00144">
    <property type="entry name" value="tRNA_thiouridyl_MnmA"/>
    <property type="match status" value="1"/>
</dbReference>
<dbReference type="InterPro" id="IPR004506">
    <property type="entry name" value="MnmA-like"/>
</dbReference>
<dbReference type="InterPro" id="IPR046885">
    <property type="entry name" value="MnmA-like_C"/>
</dbReference>
<dbReference type="InterPro" id="IPR046884">
    <property type="entry name" value="MnmA-like_central"/>
</dbReference>
<dbReference type="InterPro" id="IPR023382">
    <property type="entry name" value="MnmA-like_central_sf"/>
</dbReference>
<dbReference type="InterPro" id="IPR014729">
    <property type="entry name" value="Rossmann-like_a/b/a_fold"/>
</dbReference>
<dbReference type="NCBIfam" id="NF001138">
    <property type="entry name" value="PRK00143.1"/>
    <property type="match status" value="1"/>
</dbReference>
<dbReference type="NCBIfam" id="TIGR00420">
    <property type="entry name" value="trmU"/>
    <property type="match status" value="1"/>
</dbReference>
<dbReference type="PANTHER" id="PTHR11933:SF5">
    <property type="entry name" value="MITOCHONDRIAL TRNA-SPECIFIC 2-THIOURIDYLASE 1"/>
    <property type="match status" value="1"/>
</dbReference>
<dbReference type="PANTHER" id="PTHR11933">
    <property type="entry name" value="TRNA 5-METHYLAMINOMETHYL-2-THIOURIDYLATE -METHYLTRANSFERASE"/>
    <property type="match status" value="1"/>
</dbReference>
<dbReference type="Pfam" id="PF03054">
    <property type="entry name" value="tRNA_Me_trans"/>
    <property type="match status" value="1"/>
</dbReference>
<dbReference type="Pfam" id="PF20258">
    <property type="entry name" value="tRNA_Me_trans_C"/>
    <property type="match status" value="1"/>
</dbReference>
<dbReference type="Pfam" id="PF20259">
    <property type="entry name" value="tRNA_Me_trans_M"/>
    <property type="match status" value="1"/>
</dbReference>
<dbReference type="SUPFAM" id="SSF52402">
    <property type="entry name" value="Adenine nucleotide alpha hydrolases-like"/>
    <property type="match status" value="1"/>
</dbReference>
<keyword id="KW-0067">ATP-binding</keyword>
<keyword id="KW-0963">Cytoplasm</keyword>
<keyword id="KW-1015">Disulfide bond</keyword>
<keyword id="KW-0547">Nucleotide-binding</keyword>
<keyword id="KW-1185">Reference proteome</keyword>
<keyword id="KW-0694">RNA-binding</keyword>
<keyword id="KW-0808">Transferase</keyword>
<keyword id="KW-0819">tRNA processing</keyword>
<keyword id="KW-0820">tRNA-binding</keyword>
<comment type="function">
    <text evidence="1">Catalyzes the 2-thiolation of uridine at the wobble position (U34) of tRNA, leading to the formation of s(2)U34.</text>
</comment>
<comment type="catalytic activity">
    <reaction evidence="1">
        <text>S-sulfanyl-L-cysteinyl-[protein] + uridine(34) in tRNA + AH2 + ATP = 2-thiouridine(34) in tRNA + L-cysteinyl-[protein] + A + AMP + diphosphate + H(+)</text>
        <dbReference type="Rhea" id="RHEA:47032"/>
        <dbReference type="Rhea" id="RHEA-COMP:10131"/>
        <dbReference type="Rhea" id="RHEA-COMP:11726"/>
        <dbReference type="Rhea" id="RHEA-COMP:11727"/>
        <dbReference type="Rhea" id="RHEA-COMP:11728"/>
        <dbReference type="ChEBI" id="CHEBI:13193"/>
        <dbReference type="ChEBI" id="CHEBI:15378"/>
        <dbReference type="ChEBI" id="CHEBI:17499"/>
        <dbReference type="ChEBI" id="CHEBI:29950"/>
        <dbReference type="ChEBI" id="CHEBI:30616"/>
        <dbReference type="ChEBI" id="CHEBI:33019"/>
        <dbReference type="ChEBI" id="CHEBI:61963"/>
        <dbReference type="ChEBI" id="CHEBI:65315"/>
        <dbReference type="ChEBI" id="CHEBI:87170"/>
        <dbReference type="ChEBI" id="CHEBI:456215"/>
        <dbReference type="EC" id="2.8.1.13"/>
    </reaction>
</comment>
<comment type="subcellular location">
    <subcellularLocation>
        <location evidence="1">Cytoplasm</location>
    </subcellularLocation>
</comment>
<comment type="similarity">
    <text evidence="1">Belongs to the MnmA/TRMU family.</text>
</comment>
<sequence>MSGKRVVVGMSGGVDSSVTAWLLKQQGYEVIGLFMKNWEDDDDSEYCSTRQDWIDVVSVADLIGVDVEAVNFAAEYKDRVFADFLREYSAGRTPNPDVLCNAEIKFKAFLDHAMALGADTIATGHYARVREAGGRFELLKAFDHTKDQSYFLHRLNQAQLSRTLFPLGEMPKTRVREIAAEIGLPNARKKDSTGICFIGERPFRDFLNRYLPTKPGPIRTPDGKTIGQHIGLAFYTLGQRKGIGIGGSRDGNGDAWYVARKDMAANTLYVAQGHDHPWLLAHTVHADDLSWVAGHPPAEGTQLAAKTRYRQADAPCAVTRATGDALTLTFQQAQWAVTPGQSAVLYDGDICLGGGIIASTEAASLEQAVA</sequence>
<accession>Q8XVV4</accession>
<organism>
    <name type="scientific">Ralstonia nicotianae (strain ATCC BAA-1114 / GMI1000)</name>
    <name type="common">Ralstonia solanacearum</name>
    <dbReference type="NCBI Taxonomy" id="267608"/>
    <lineage>
        <taxon>Bacteria</taxon>
        <taxon>Pseudomonadati</taxon>
        <taxon>Pseudomonadota</taxon>
        <taxon>Betaproteobacteria</taxon>
        <taxon>Burkholderiales</taxon>
        <taxon>Burkholderiaceae</taxon>
        <taxon>Ralstonia</taxon>
        <taxon>Ralstonia solanacearum species complex</taxon>
    </lineage>
</organism>